<reference key="1">
    <citation type="submission" date="2009-03" db="EMBL/GenBank/DDBJ databases">
        <title>Brucella melitensis ATCC 23457 whole genome shotgun sequencing project.</title>
        <authorList>
            <person name="Setubal J.C."/>
            <person name="Boyle S."/>
            <person name="Crasta O.R."/>
            <person name="Gillespie J.J."/>
            <person name="Kenyon R.W."/>
            <person name="Lu J."/>
            <person name="Mane S."/>
            <person name="Nagrani S."/>
            <person name="Shallom J.M."/>
            <person name="Shallom S."/>
            <person name="Shukla M."/>
            <person name="Snyder E.E."/>
            <person name="Sobral B.W."/>
            <person name="Wattam A.R."/>
            <person name="Will R."/>
            <person name="Williams K."/>
            <person name="Yoo H."/>
            <person name="Munk C."/>
            <person name="Tapia R."/>
            <person name="Han C."/>
            <person name="Detter J.C."/>
            <person name="Bruce D."/>
            <person name="Brettin T.S."/>
        </authorList>
    </citation>
    <scope>NUCLEOTIDE SEQUENCE [LARGE SCALE GENOMIC DNA]</scope>
    <source>
        <strain>ATCC 23457</strain>
    </source>
</reference>
<organism>
    <name type="scientific">Brucella melitensis biotype 2 (strain ATCC 23457)</name>
    <dbReference type="NCBI Taxonomy" id="546272"/>
    <lineage>
        <taxon>Bacteria</taxon>
        <taxon>Pseudomonadati</taxon>
        <taxon>Pseudomonadota</taxon>
        <taxon>Alphaproteobacteria</taxon>
        <taxon>Hyphomicrobiales</taxon>
        <taxon>Brucellaceae</taxon>
        <taxon>Brucella/Ochrobactrum group</taxon>
        <taxon>Brucella</taxon>
    </lineage>
</organism>
<dbReference type="EMBL" id="CP001489">
    <property type="protein sequence ID" value="ACO02766.1"/>
    <property type="molecule type" value="Genomic_DNA"/>
</dbReference>
<dbReference type="RefSeq" id="WP_004682401.1">
    <property type="nucleotide sequence ID" value="NC_012442.1"/>
</dbReference>
<dbReference type="SMR" id="C0RMD3"/>
<dbReference type="GeneID" id="29595626"/>
<dbReference type="KEGG" id="bmi:BMEA_B0976"/>
<dbReference type="HOGENOM" id="CLU_080662_2_0_5"/>
<dbReference type="Proteomes" id="UP000001748">
    <property type="component" value="Chromosome II"/>
</dbReference>
<dbReference type="GO" id="GO:0005886">
    <property type="term" value="C:plasma membrane"/>
    <property type="evidence" value="ECO:0007669"/>
    <property type="project" value="UniProtKB-SubCell"/>
</dbReference>
<dbReference type="GO" id="GO:0009055">
    <property type="term" value="F:electron transfer activity"/>
    <property type="evidence" value="ECO:0007669"/>
    <property type="project" value="UniProtKB-UniRule"/>
</dbReference>
<dbReference type="GO" id="GO:0010181">
    <property type="term" value="F:FMN binding"/>
    <property type="evidence" value="ECO:0007669"/>
    <property type="project" value="UniProtKB-UniRule"/>
</dbReference>
<dbReference type="GO" id="GO:0020037">
    <property type="term" value="F:heme binding"/>
    <property type="evidence" value="ECO:0007669"/>
    <property type="project" value="UniProtKB-UniRule"/>
</dbReference>
<dbReference type="GO" id="GO:0046872">
    <property type="term" value="F:metal ion binding"/>
    <property type="evidence" value="ECO:0007669"/>
    <property type="project" value="UniProtKB-KW"/>
</dbReference>
<dbReference type="GO" id="GO:0016679">
    <property type="term" value="F:oxidoreductase activity, acting on diphenols and related substances as donors"/>
    <property type="evidence" value="ECO:0007669"/>
    <property type="project" value="TreeGrafter"/>
</dbReference>
<dbReference type="GO" id="GO:0030091">
    <property type="term" value="P:protein repair"/>
    <property type="evidence" value="ECO:0007669"/>
    <property type="project" value="UniProtKB-UniRule"/>
</dbReference>
<dbReference type="HAMAP" id="MF_01207">
    <property type="entry name" value="MsrQ"/>
    <property type="match status" value="1"/>
</dbReference>
<dbReference type="InterPro" id="IPR013130">
    <property type="entry name" value="Fe3_Rdtase_TM_dom"/>
</dbReference>
<dbReference type="InterPro" id="IPR022837">
    <property type="entry name" value="MsrQ-like"/>
</dbReference>
<dbReference type="NCBIfam" id="NF003833">
    <property type="entry name" value="PRK05419.1-5"/>
    <property type="match status" value="1"/>
</dbReference>
<dbReference type="PANTHER" id="PTHR36964">
    <property type="entry name" value="PROTEIN-METHIONINE-SULFOXIDE REDUCTASE HEME-BINDING SUBUNIT MSRQ"/>
    <property type="match status" value="1"/>
</dbReference>
<dbReference type="PANTHER" id="PTHR36964:SF1">
    <property type="entry name" value="PROTEIN-METHIONINE-SULFOXIDE REDUCTASE HEME-BINDING SUBUNIT MSRQ"/>
    <property type="match status" value="1"/>
</dbReference>
<dbReference type="Pfam" id="PF01794">
    <property type="entry name" value="Ferric_reduct"/>
    <property type="match status" value="1"/>
</dbReference>
<comment type="function">
    <text evidence="1">Part of the MsrPQ system that repairs oxidized periplasmic proteins containing methionine sulfoxide residues (Met-O), using respiratory chain electrons. Thus protects these proteins from oxidative-stress damage caused by reactive species of oxygen and chlorine generated by the host defense mechanisms. MsrPQ is essential for the maintenance of envelope integrity under bleach stress, rescuing a wide series of structurally unrelated periplasmic proteins from methionine oxidation. MsrQ provides electrons for reduction to the reductase catalytic subunit MsrP, using the quinone pool of the respiratory chain.</text>
</comment>
<comment type="cofactor">
    <cofactor evidence="1">
        <name>FMN</name>
        <dbReference type="ChEBI" id="CHEBI:58210"/>
    </cofactor>
    <text evidence="1">Binds 1 FMN per subunit.</text>
</comment>
<comment type="cofactor">
    <cofactor evidence="1">
        <name>heme b</name>
        <dbReference type="ChEBI" id="CHEBI:60344"/>
    </cofactor>
    <text evidence="1">Binds 1 heme b (iron(II)-protoporphyrin IX) group per subunit.</text>
</comment>
<comment type="subunit">
    <text evidence="1">Heterodimer of a catalytic subunit (MsrP) and a heme-binding subunit (MsrQ).</text>
</comment>
<comment type="subcellular location">
    <subcellularLocation>
        <location evidence="1">Cell inner membrane</location>
        <topology evidence="1">Multi-pass membrane protein</topology>
    </subcellularLocation>
</comment>
<comment type="similarity">
    <text evidence="1">Belongs to the MsrQ family.</text>
</comment>
<sequence>MAAATGTRKKKTPRPGQWKLWLLYTAGFVPAVWTFYLGATGQLGADPVKTFEHLLGLWALRFLILTLLVTPMRDLTGITLLRYRRALGLLAFYYALMHFTTYMVLDQGLNLSAIITDIVRRPFITIGMISLALLVPLALTSNNWSIRKLGRRWSSLHKLVYIAIAGSAVHFLMSVKSWPAEPVIYAAIVAALLLWRLARPYLRTRKPALRPRGEAIALRK</sequence>
<protein>
    <recommendedName>
        <fullName evidence="1">Protein-methionine-sulfoxide reductase heme-binding subunit MsrQ</fullName>
    </recommendedName>
    <alternativeName>
        <fullName evidence="1">Flavocytochrome MsrQ</fullName>
    </alternativeName>
</protein>
<proteinExistence type="inferred from homology"/>
<evidence type="ECO:0000255" key="1">
    <source>
        <dbReference type="HAMAP-Rule" id="MF_01207"/>
    </source>
</evidence>
<keyword id="KW-0997">Cell inner membrane</keyword>
<keyword id="KW-1003">Cell membrane</keyword>
<keyword id="KW-0249">Electron transport</keyword>
<keyword id="KW-0285">Flavoprotein</keyword>
<keyword id="KW-0288">FMN</keyword>
<keyword id="KW-0349">Heme</keyword>
<keyword id="KW-0408">Iron</keyword>
<keyword id="KW-0472">Membrane</keyword>
<keyword id="KW-0479">Metal-binding</keyword>
<keyword id="KW-0812">Transmembrane</keyword>
<keyword id="KW-1133">Transmembrane helix</keyword>
<keyword id="KW-0813">Transport</keyword>
<accession>C0RMD3</accession>
<name>MSRQ_BRUMB</name>
<gene>
    <name evidence="1" type="primary">msrQ</name>
    <name type="ordered locus">BMEA_B0976</name>
</gene>
<feature type="chain" id="PRO_1000164660" description="Protein-methionine-sulfoxide reductase heme-binding subunit MsrQ">
    <location>
        <begin position="1"/>
        <end position="220"/>
    </location>
</feature>
<feature type="transmembrane region" description="Helical" evidence="1">
    <location>
        <begin position="20"/>
        <end position="40"/>
    </location>
</feature>
<feature type="transmembrane region" description="Helical" evidence="1">
    <location>
        <begin position="51"/>
        <end position="71"/>
    </location>
</feature>
<feature type="transmembrane region" description="Helical" evidence="1">
    <location>
        <begin position="86"/>
        <end position="106"/>
    </location>
</feature>
<feature type="transmembrane region" description="Helical" evidence="1">
    <location>
        <begin position="122"/>
        <end position="142"/>
    </location>
</feature>
<feature type="transmembrane region" description="Helical" evidence="1">
    <location>
        <begin position="153"/>
        <end position="173"/>
    </location>
</feature>
<feature type="transmembrane region" description="Helical" evidence="1">
    <location>
        <begin position="175"/>
        <end position="195"/>
    </location>
</feature>